<organism>
    <name type="scientific">Mus musculus</name>
    <name type="common">Mouse</name>
    <dbReference type="NCBI Taxonomy" id="10090"/>
    <lineage>
        <taxon>Eukaryota</taxon>
        <taxon>Metazoa</taxon>
        <taxon>Chordata</taxon>
        <taxon>Craniata</taxon>
        <taxon>Vertebrata</taxon>
        <taxon>Euteleostomi</taxon>
        <taxon>Mammalia</taxon>
        <taxon>Eutheria</taxon>
        <taxon>Euarchontoglires</taxon>
        <taxon>Glires</taxon>
        <taxon>Rodentia</taxon>
        <taxon>Myomorpha</taxon>
        <taxon>Muroidea</taxon>
        <taxon>Muridae</taxon>
        <taxon>Murinae</taxon>
        <taxon>Mus</taxon>
        <taxon>Mus</taxon>
    </lineage>
</organism>
<protein>
    <recommendedName>
        <fullName>Vacuolar protein sorting-associated protein 35</fullName>
    </recommendedName>
    <alternativeName>
        <fullName>Maternal-embryonic 3</fullName>
    </alternativeName>
    <alternativeName>
        <fullName>Vesicle protein sorting 35</fullName>
    </alternativeName>
</protein>
<accession>Q9EQH3</accession>
<accession>Q61123</accession>
<gene>
    <name type="primary">Vps35</name>
    <name type="synonym">Mem3</name>
</gene>
<dbReference type="EMBL" id="U47024">
    <property type="protein sequence ID" value="AAB18153.1"/>
    <property type="status" value="ALT_FRAME"/>
    <property type="molecule type" value="mRNA"/>
</dbReference>
<dbReference type="EMBL" id="AF226323">
    <property type="protein sequence ID" value="AAG40621.1"/>
    <property type="molecule type" value="mRNA"/>
</dbReference>
<dbReference type="EMBL" id="BC005469">
    <property type="protein sequence ID" value="AAH05469.1"/>
    <property type="molecule type" value="mRNA"/>
</dbReference>
<dbReference type="EMBL" id="BC006637">
    <property type="protein sequence ID" value="AAH06637.1"/>
    <property type="molecule type" value="mRNA"/>
</dbReference>
<dbReference type="CCDS" id="CCDS40421.1"/>
<dbReference type="RefSeq" id="NP_075373.1">
    <property type="nucleotide sequence ID" value="NM_022997.5"/>
</dbReference>
<dbReference type="PDB" id="6VAB">
    <property type="method" value="EM"/>
    <property type="resolution" value="4.90 A"/>
    <property type="chains" value="B/D=1-796"/>
</dbReference>
<dbReference type="PDB" id="6VAC">
    <property type="method" value="EM"/>
    <property type="resolution" value="5.70 A"/>
    <property type="chains" value="A=1-796"/>
</dbReference>
<dbReference type="PDB" id="7U6F">
    <property type="method" value="EM"/>
    <property type="resolution" value="4.90 A"/>
    <property type="chains" value="D1=1-796"/>
</dbReference>
<dbReference type="PDB" id="8TTA">
    <property type="method" value="X-ray"/>
    <property type="resolution" value="3.46 A"/>
    <property type="chains" value="B/D=483-796"/>
</dbReference>
<dbReference type="PDB" id="8TTC">
    <property type="method" value="X-ray"/>
    <property type="resolution" value="3.01 A"/>
    <property type="chains" value="B/D=483-796"/>
</dbReference>
<dbReference type="PDBsum" id="6VAB"/>
<dbReference type="PDBsum" id="6VAC"/>
<dbReference type="PDBsum" id="7U6F"/>
<dbReference type="PDBsum" id="8TTA"/>
<dbReference type="PDBsum" id="8TTC"/>
<dbReference type="EMDB" id="EMD-21135"/>
<dbReference type="EMDB" id="EMD-21136"/>
<dbReference type="EMDB" id="EMD-24963"/>
<dbReference type="EMDB" id="EMD-24964"/>
<dbReference type="EMDB" id="EMD-26340"/>
<dbReference type="EMDB" id="EMD-26341"/>
<dbReference type="EMDB" id="EMD-26342"/>
<dbReference type="EMDB" id="EMD-26343"/>
<dbReference type="EMDB" id="EMD-26345"/>
<dbReference type="SMR" id="Q9EQH3"/>
<dbReference type="BioGRID" id="211137">
    <property type="interactions" value="34"/>
</dbReference>
<dbReference type="CORUM" id="Q9EQH3"/>
<dbReference type="DIP" id="DIP-32210N"/>
<dbReference type="FunCoup" id="Q9EQH3">
    <property type="interactions" value="4388"/>
</dbReference>
<dbReference type="IntAct" id="Q9EQH3">
    <property type="interactions" value="33"/>
</dbReference>
<dbReference type="MINT" id="Q9EQH3"/>
<dbReference type="STRING" id="10090.ENSMUSP00000034131"/>
<dbReference type="GlyGen" id="Q9EQH3">
    <property type="glycosylation" value="1 site, 1 O-linked glycan (1 site)"/>
</dbReference>
<dbReference type="iPTMnet" id="Q9EQH3"/>
<dbReference type="PhosphoSitePlus" id="Q9EQH3"/>
<dbReference type="SwissPalm" id="Q9EQH3"/>
<dbReference type="jPOST" id="Q9EQH3"/>
<dbReference type="PaxDb" id="10090-ENSMUSP00000034131"/>
<dbReference type="ProteomicsDB" id="297815"/>
<dbReference type="Pumba" id="Q9EQH3"/>
<dbReference type="Antibodypedia" id="28023">
    <property type="antibodies" value="275 antibodies from 40 providers"/>
</dbReference>
<dbReference type="DNASU" id="65114"/>
<dbReference type="Ensembl" id="ENSMUST00000034131.10">
    <property type="protein sequence ID" value="ENSMUSP00000034131.9"/>
    <property type="gene ID" value="ENSMUSG00000031696.10"/>
</dbReference>
<dbReference type="GeneID" id="65114"/>
<dbReference type="KEGG" id="mmu:65114"/>
<dbReference type="UCSC" id="uc009mpo.1">
    <property type="organism name" value="mouse"/>
</dbReference>
<dbReference type="AGR" id="MGI:1890467"/>
<dbReference type="CTD" id="55737"/>
<dbReference type="MGI" id="MGI:1890467">
    <property type="gene designation" value="Vps35"/>
</dbReference>
<dbReference type="VEuPathDB" id="HostDB:ENSMUSG00000031696"/>
<dbReference type="eggNOG" id="KOG1107">
    <property type="taxonomic scope" value="Eukaryota"/>
</dbReference>
<dbReference type="GeneTree" id="ENSGT00390000007315"/>
<dbReference type="HOGENOM" id="CLU_005836_1_0_1"/>
<dbReference type="InParanoid" id="Q9EQH3"/>
<dbReference type="OMA" id="YIRSREY"/>
<dbReference type="OrthoDB" id="10258141at2759"/>
<dbReference type="PhylomeDB" id="Q9EQH3"/>
<dbReference type="TreeFam" id="TF105659"/>
<dbReference type="Reactome" id="R-MMU-3238698">
    <property type="pathway name" value="WNT ligand biogenesis and trafficking"/>
</dbReference>
<dbReference type="BioGRID-ORCS" id="65114">
    <property type="hits" value="32 hits in 80 CRISPR screens"/>
</dbReference>
<dbReference type="CD-CODE" id="CE726F99">
    <property type="entry name" value="Postsynaptic density"/>
</dbReference>
<dbReference type="CD-CODE" id="DE1E139C">
    <property type="entry name" value="Chromatoid body"/>
</dbReference>
<dbReference type="ChiTaRS" id="Vps35">
    <property type="organism name" value="mouse"/>
</dbReference>
<dbReference type="PRO" id="PR:Q9EQH3"/>
<dbReference type="Proteomes" id="UP000000589">
    <property type="component" value="Chromosome 8"/>
</dbReference>
<dbReference type="RNAct" id="Q9EQH3">
    <property type="molecule type" value="protein"/>
</dbReference>
<dbReference type="Bgee" id="ENSMUSG00000031696">
    <property type="expression patterns" value="Expressed in medial ganglionic eminence and 259 other cell types or tissues"/>
</dbReference>
<dbReference type="ExpressionAtlas" id="Q9EQH3">
    <property type="expression patterns" value="baseline and differential"/>
</dbReference>
<dbReference type="GO" id="GO:0005737">
    <property type="term" value="C:cytoplasm"/>
    <property type="evidence" value="ECO:0000314"/>
    <property type="project" value="ParkinsonsUK-UCL"/>
</dbReference>
<dbReference type="GO" id="GO:0005829">
    <property type="term" value="C:cytosol"/>
    <property type="evidence" value="ECO:0007669"/>
    <property type="project" value="Ensembl"/>
</dbReference>
<dbReference type="GO" id="GO:0098691">
    <property type="term" value="C:dopaminergic synapse"/>
    <property type="evidence" value="ECO:0000314"/>
    <property type="project" value="SynGO"/>
</dbReference>
<dbReference type="GO" id="GO:0005769">
    <property type="term" value="C:early endosome"/>
    <property type="evidence" value="ECO:0007669"/>
    <property type="project" value="UniProtKB-SubCell"/>
</dbReference>
<dbReference type="GO" id="GO:0005768">
    <property type="term" value="C:endosome"/>
    <property type="evidence" value="ECO:0000314"/>
    <property type="project" value="MGI"/>
</dbReference>
<dbReference type="GO" id="GO:0010008">
    <property type="term" value="C:endosome membrane"/>
    <property type="evidence" value="ECO:0007669"/>
    <property type="project" value="Ensembl"/>
</dbReference>
<dbReference type="GO" id="GO:0098978">
    <property type="term" value="C:glutamatergic synapse"/>
    <property type="evidence" value="ECO:0000314"/>
    <property type="project" value="SynGO"/>
</dbReference>
<dbReference type="GO" id="GO:0005770">
    <property type="term" value="C:late endosome"/>
    <property type="evidence" value="ECO:0007669"/>
    <property type="project" value="UniProtKB-SubCell"/>
</dbReference>
<dbReference type="GO" id="GO:0005764">
    <property type="term" value="C:lysosome"/>
    <property type="evidence" value="ECO:0007669"/>
    <property type="project" value="Ensembl"/>
</dbReference>
<dbReference type="GO" id="GO:0016020">
    <property type="term" value="C:membrane"/>
    <property type="evidence" value="ECO:0000247"/>
    <property type="project" value="MGI"/>
</dbReference>
<dbReference type="GO" id="GO:0005739">
    <property type="term" value="C:mitochondrion"/>
    <property type="evidence" value="ECO:0007669"/>
    <property type="project" value="Ensembl"/>
</dbReference>
<dbReference type="GO" id="GO:0099073">
    <property type="term" value="C:mitochondrion-derived vesicle"/>
    <property type="evidence" value="ECO:0007669"/>
    <property type="project" value="Ensembl"/>
</dbReference>
<dbReference type="GO" id="GO:0043005">
    <property type="term" value="C:neuron projection"/>
    <property type="evidence" value="ECO:0000315"/>
    <property type="project" value="ParkinsonsUK-UCL"/>
</dbReference>
<dbReference type="GO" id="GO:0043025">
    <property type="term" value="C:neuronal cell body"/>
    <property type="evidence" value="ECO:0000315"/>
    <property type="project" value="ParkinsonsUK-UCL"/>
</dbReference>
<dbReference type="GO" id="GO:0048471">
    <property type="term" value="C:perinuclear region of cytoplasm"/>
    <property type="evidence" value="ECO:0000315"/>
    <property type="project" value="ParkinsonsUK-UCL"/>
</dbReference>
<dbReference type="GO" id="GO:0098794">
    <property type="term" value="C:postsynapse"/>
    <property type="evidence" value="ECO:0000314"/>
    <property type="project" value="SynGO"/>
</dbReference>
<dbReference type="GO" id="GO:0014069">
    <property type="term" value="C:postsynaptic density"/>
    <property type="evidence" value="ECO:0000314"/>
    <property type="project" value="MGI"/>
</dbReference>
<dbReference type="GO" id="GO:0098793">
    <property type="term" value="C:presynapse"/>
    <property type="evidence" value="ECO:0000314"/>
    <property type="project" value="SynGO"/>
</dbReference>
<dbReference type="GO" id="GO:0030904">
    <property type="term" value="C:retromer complex"/>
    <property type="evidence" value="ECO:0000314"/>
    <property type="project" value="UniProtKB"/>
</dbReference>
<dbReference type="GO" id="GO:0030906">
    <property type="term" value="C:retromer, cargo-selective complex"/>
    <property type="evidence" value="ECO:0007669"/>
    <property type="project" value="Ensembl"/>
</dbReference>
<dbReference type="GO" id="GO:0045202">
    <property type="term" value="C:synapse"/>
    <property type="evidence" value="ECO:0000314"/>
    <property type="project" value="MGI"/>
</dbReference>
<dbReference type="GO" id="GO:0097422">
    <property type="term" value="C:tubular endosome"/>
    <property type="evidence" value="ECO:0000250"/>
    <property type="project" value="UniProtKB"/>
</dbReference>
<dbReference type="GO" id="GO:0031748">
    <property type="term" value="F:D1 dopamine receptor binding"/>
    <property type="evidence" value="ECO:0000353"/>
    <property type="project" value="ParkinsonsUK-UCL"/>
</dbReference>
<dbReference type="GO" id="GO:0032456">
    <property type="term" value="P:endocytic recycling"/>
    <property type="evidence" value="ECO:0000250"/>
    <property type="project" value="UniProtKB"/>
</dbReference>
<dbReference type="GO" id="GO:0007040">
    <property type="term" value="P:lysosome organization"/>
    <property type="evidence" value="ECO:0000315"/>
    <property type="project" value="ParkinsonsUK-UCL"/>
</dbReference>
<dbReference type="GO" id="GO:0043653">
    <property type="term" value="P:mitochondrial fragmentation involved in apoptotic process"/>
    <property type="evidence" value="ECO:0007669"/>
    <property type="project" value="Ensembl"/>
</dbReference>
<dbReference type="GO" id="GO:0099074">
    <property type="term" value="P:mitochondrion to lysosome vesicle-mediated transport"/>
    <property type="evidence" value="ECO:0007669"/>
    <property type="project" value="Ensembl"/>
</dbReference>
<dbReference type="GO" id="GO:0050804">
    <property type="term" value="P:modulation of chemical synaptic transmission"/>
    <property type="evidence" value="ECO:0000314"/>
    <property type="project" value="SynGO"/>
</dbReference>
<dbReference type="GO" id="GO:0010629">
    <property type="term" value="P:negative regulation of gene expression"/>
    <property type="evidence" value="ECO:0000315"/>
    <property type="project" value="ARUK-UCL"/>
</dbReference>
<dbReference type="GO" id="GO:0050728">
    <property type="term" value="P:negative regulation of inflammatory response"/>
    <property type="evidence" value="ECO:0007669"/>
    <property type="project" value="Ensembl"/>
</dbReference>
<dbReference type="GO" id="GO:1902823">
    <property type="term" value="P:negative regulation of late endosome to lysosome transport"/>
    <property type="evidence" value="ECO:0007669"/>
    <property type="project" value="Ensembl"/>
</dbReference>
<dbReference type="GO" id="GO:1905166">
    <property type="term" value="P:negative regulation of lysosomal protein catabolic process"/>
    <property type="evidence" value="ECO:0000315"/>
    <property type="project" value="ParkinsonsUK-UCL"/>
</dbReference>
<dbReference type="GO" id="GO:0032463">
    <property type="term" value="P:negative regulation of protein homooligomerization"/>
    <property type="evidence" value="ECO:0000315"/>
    <property type="project" value="ParkinsonsUK-UCL"/>
</dbReference>
<dbReference type="GO" id="GO:1903828">
    <property type="term" value="P:negative regulation of protein localization"/>
    <property type="evidence" value="ECO:0000315"/>
    <property type="project" value="ParkinsonsUK-UCL"/>
</dbReference>
<dbReference type="GO" id="GO:0099639">
    <property type="term" value="P:neurotransmitter receptor transport, endosome to plasma membrane"/>
    <property type="evidence" value="ECO:0000315"/>
    <property type="project" value="ParkinsonsUK-UCL"/>
</dbReference>
<dbReference type="GO" id="GO:0098887">
    <property type="term" value="P:neurotransmitter receptor transport, endosome to postsynaptic membrane"/>
    <property type="evidence" value="ECO:0000314"/>
    <property type="project" value="SynGO"/>
</dbReference>
<dbReference type="GO" id="GO:0090263">
    <property type="term" value="P:positive regulation of canonical Wnt signaling pathway"/>
    <property type="evidence" value="ECO:0000316"/>
    <property type="project" value="ParkinsonsUK-UCL"/>
</dbReference>
<dbReference type="GO" id="GO:1903181">
    <property type="term" value="P:positive regulation of dopamine biosynthetic process"/>
    <property type="evidence" value="ECO:0000315"/>
    <property type="project" value="ParkinsonsUK-UCL"/>
</dbReference>
<dbReference type="GO" id="GO:0060161">
    <property type="term" value="P:positive regulation of dopamine receptor signaling pathway"/>
    <property type="evidence" value="ECO:0007669"/>
    <property type="project" value="Ensembl"/>
</dbReference>
<dbReference type="GO" id="GO:0010628">
    <property type="term" value="P:positive regulation of gene expression"/>
    <property type="evidence" value="ECO:0000315"/>
    <property type="project" value="ParkinsonsUK-UCL"/>
</dbReference>
<dbReference type="GO" id="GO:0090326">
    <property type="term" value="P:positive regulation of locomotion involved in locomotory behavior"/>
    <property type="evidence" value="ECO:0000315"/>
    <property type="project" value="ARUK-UCL"/>
</dbReference>
<dbReference type="GO" id="GO:0090141">
    <property type="term" value="P:positive regulation of mitochondrial fission"/>
    <property type="evidence" value="ECO:0007669"/>
    <property type="project" value="Ensembl"/>
</dbReference>
<dbReference type="GO" id="GO:0045732">
    <property type="term" value="P:positive regulation of protein catabolic process"/>
    <property type="evidence" value="ECO:0007669"/>
    <property type="project" value="Ensembl"/>
</dbReference>
<dbReference type="GO" id="GO:1904377">
    <property type="term" value="P:positive regulation of protein localization to cell periphery"/>
    <property type="evidence" value="ECO:0007669"/>
    <property type="project" value="Ensembl"/>
</dbReference>
<dbReference type="GO" id="GO:0061357">
    <property type="term" value="P:positive regulation of Wnt protein secretion"/>
    <property type="evidence" value="ECO:0000315"/>
    <property type="project" value="ParkinsonsUK-UCL"/>
</dbReference>
<dbReference type="GO" id="GO:0031648">
    <property type="term" value="P:protein destabilization"/>
    <property type="evidence" value="ECO:0000315"/>
    <property type="project" value="ParkinsonsUK-UCL"/>
</dbReference>
<dbReference type="GO" id="GO:0036010">
    <property type="term" value="P:protein localization to endosome"/>
    <property type="evidence" value="ECO:0000250"/>
    <property type="project" value="UniProtKB"/>
</dbReference>
<dbReference type="GO" id="GO:0033365">
    <property type="term" value="P:protein localization to organelle"/>
    <property type="evidence" value="ECO:0000315"/>
    <property type="project" value="ParkinsonsUK-UCL"/>
</dbReference>
<dbReference type="GO" id="GO:1902950">
    <property type="term" value="P:regulation of dendritic spine maintenance"/>
    <property type="evidence" value="ECO:0007669"/>
    <property type="project" value="Ensembl"/>
</dbReference>
<dbReference type="GO" id="GO:0150052">
    <property type="term" value="P:regulation of postsynapse assembly"/>
    <property type="evidence" value="ECO:0000314"/>
    <property type="project" value="SynGO"/>
</dbReference>
<dbReference type="GO" id="GO:0090128">
    <property type="term" value="P:regulation of synapse maturation"/>
    <property type="evidence" value="ECO:0000314"/>
    <property type="project" value="SynGO"/>
</dbReference>
<dbReference type="GO" id="GO:2000331">
    <property type="term" value="P:regulation of terminal button organization"/>
    <property type="evidence" value="ECO:0007669"/>
    <property type="project" value="Ensembl"/>
</dbReference>
<dbReference type="GO" id="GO:0042147">
    <property type="term" value="P:retrograde transport, endosome to Golgi"/>
    <property type="evidence" value="ECO:0000250"/>
    <property type="project" value="UniProtKB"/>
</dbReference>
<dbReference type="GO" id="GO:0045056">
    <property type="term" value="P:transcytosis"/>
    <property type="evidence" value="ECO:0000250"/>
    <property type="project" value="UniProtKB"/>
</dbReference>
<dbReference type="GO" id="GO:0006624">
    <property type="term" value="P:vacuolar protein processing"/>
    <property type="evidence" value="ECO:0000247"/>
    <property type="project" value="MGI"/>
</dbReference>
<dbReference type="GO" id="GO:0099003">
    <property type="term" value="P:vesicle-mediated transport in synapse"/>
    <property type="evidence" value="ECO:0000314"/>
    <property type="project" value="SynGO"/>
</dbReference>
<dbReference type="GO" id="GO:0050882">
    <property type="term" value="P:voluntary musculoskeletal movement"/>
    <property type="evidence" value="ECO:0000315"/>
    <property type="project" value="ARUK-UCL"/>
</dbReference>
<dbReference type="FunFam" id="1.25.40.660:FF:000001">
    <property type="entry name" value="Vacuolar protein sorting-associated protein 35"/>
    <property type="match status" value="1"/>
</dbReference>
<dbReference type="Gene3D" id="1.25.40.660">
    <property type="entry name" value="Vacuolar protein sorting-associated protein 35, helical subcomplex Vps35-C"/>
    <property type="match status" value="1"/>
</dbReference>
<dbReference type="InterPro" id="IPR016024">
    <property type="entry name" value="ARM-type_fold"/>
</dbReference>
<dbReference type="InterPro" id="IPR005378">
    <property type="entry name" value="Vps35"/>
</dbReference>
<dbReference type="InterPro" id="IPR042491">
    <property type="entry name" value="Vps35_C"/>
</dbReference>
<dbReference type="PANTHER" id="PTHR11099:SF0">
    <property type="entry name" value="VACUOLAR PROTEIN SORTING-ASSOCIATED PROTEIN 35"/>
    <property type="match status" value="1"/>
</dbReference>
<dbReference type="PANTHER" id="PTHR11099">
    <property type="entry name" value="VACUOLAR SORTING PROTEIN 35"/>
    <property type="match status" value="1"/>
</dbReference>
<dbReference type="Pfam" id="PF03635">
    <property type="entry name" value="Vps35"/>
    <property type="match status" value="1"/>
</dbReference>
<dbReference type="PIRSF" id="PIRSF009375">
    <property type="entry name" value="Retromer_Vps35"/>
    <property type="match status" value="1"/>
</dbReference>
<dbReference type="SUPFAM" id="SSF48371">
    <property type="entry name" value="ARM repeat"/>
    <property type="match status" value="1"/>
</dbReference>
<evidence type="ECO:0000250" key="1"/>
<evidence type="ECO:0000250" key="2">
    <source>
        <dbReference type="UniProtKB" id="Q96QK1"/>
    </source>
</evidence>
<evidence type="ECO:0000256" key="3">
    <source>
        <dbReference type="SAM" id="MobiDB-lite"/>
    </source>
</evidence>
<evidence type="ECO:0000269" key="4">
    <source>
    </source>
</evidence>
<evidence type="ECO:0000269" key="5">
    <source>
    </source>
</evidence>
<evidence type="ECO:0000269" key="6">
    <source>
    </source>
</evidence>
<evidence type="ECO:0000269" key="7">
    <source>
    </source>
</evidence>
<evidence type="ECO:0000269" key="8">
    <source>
    </source>
</evidence>
<evidence type="ECO:0000269" key="9">
    <source>
    </source>
</evidence>
<evidence type="ECO:0000305" key="10"/>
<evidence type="ECO:0007744" key="11">
    <source>
    </source>
</evidence>
<evidence type="ECO:0007744" key="12">
    <source>
    </source>
</evidence>
<evidence type="ECO:0007744" key="13">
    <source>
    </source>
</evidence>
<name>VPS35_MOUSE</name>
<feature type="chain" id="PRO_0000065897" description="Vacuolar protein sorting-associated protein 35">
    <location>
        <begin position="1"/>
        <end position="796"/>
    </location>
</feature>
<feature type="region of interest" description="Interaction with SNX3" evidence="2">
    <location>
        <begin position="25"/>
        <end position="44"/>
    </location>
</feature>
<feature type="region of interest" description="Interaction with SNX3" evidence="2">
    <location>
        <begin position="205"/>
        <end position="215"/>
    </location>
</feature>
<feature type="region of interest" description="Interaction with SLC11A2" evidence="2">
    <location>
        <begin position="438"/>
        <end position="796"/>
    </location>
</feature>
<feature type="region of interest" description="Interaction with IGF2R cytoplasmic domain" evidence="2">
    <location>
        <begin position="500"/>
        <end position="693"/>
    </location>
</feature>
<feature type="region of interest" description="Disordered" evidence="3">
    <location>
        <begin position="776"/>
        <end position="796"/>
    </location>
</feature>
<feature type="modified residue" description="Phosphoserine" evidence="2">
    <location>
        <position position="7"/>
    </location>
</feature>
<feature type="modified residue" description="Phosphoserine" evidence="13">
    <location>
        <position position="783"/>
    </location>
</feature>
<feature type="modified residue" description="Phosphotyrosine" evidence="11 12">
    <location>
        <position position="791"/>
    </location>
</feature>
<reference key="1">
    <citation type="journal article" date="1996" name="Mamm. Genome">
        <title>Genetic mapping and embryonic expression of a novel, maternally transcribed gene Mem3.</title>
        <authorList>
            <person name="Hwang S.-Y."/>
            <person name="Benjamin L.E."/>
            <person name="Oh B."/>
            <person name="Rothstein J.L."/>
            <person name="Ackerman S.L."/>
            <person name="Beddington R.S.P."/>
            <person name="Solter D."/>
            <person name="Knowles B.B."/>
        </authorList>
    </citation>
    <scope>NUCLEOTIDE SEQUENCE [MRNA]</scope>
    <source>
        <tissue>Embryo</tissue>
        <tissue>Embryonic carcinoma</tissue>
    </source>
</reference>
<reference key="2">
    <citation type="journal article" date="2000" name="Genomics">
        <title>Cloning and characterization of human VPS35 and mouse Vps35 and mapping of VPS35 to human chromosome 16q13-q21.</title>
        <authorList>
            <person name="Zhang P."/>
            <person name="Yu L."/>
            <person name="Gao J."/>
            <person name="Fu Q."/>
            <person name="Dai F."/>
            <person name="Zhao Y."/>
            <person name="Zheng L."/>
            <person name="Zhao S."/>
        </authorList>
    </citation>
    <scope>NUCLEOTIDE SEQUENCE [MRNA]</scope>
</reference>
<reference key="3">
    <citation type="journal article" date="2004" name="Genome Res.">
        <title>The status, quality, and expansion of the NIH full-length cDNA project: the Mammalian Gene Collection (MGC).</title>
        <authorList>
            <consortium name="The MGC Project Team"/>
        </authorList>
    </citation>
    <scope>NUCLEOTIDE SEQUENCE [LARGE SCALE MRNA]</scope>
    <source>
        <tissue>Mammary tumor</tissue>
    </source>
</reference>
<reference key="4">
    <citation type="submission" date="2007-04" db="UniProtKB">
        <authorList>
            <person name="Lubec G."/>
            <person name="Kang S.U."/>
        </authorList>
    </citation>
    <scope>PROTEIN SEQUENCE OF 91-107; 218-226; 297-305; 313-323; 372-382; 404-417 AND 574-582</scope>
    <scope>IDENTIFICATION BY MASS SPECTROMETRY</scope>
    <source>
        <strain>C57BL/6J</strain>
        <tissue>Brain</tissue>
    </source>
</reference>
<reference key="5">
    <citation type="journal article" date="2005" name="Traffic">
        <title>A novel mammalian retromer component, Vps26B.</title>
        <authorList>
            <person name="Kerr M.C."/>
            <person name="Bennetts J.S."/>
            <person name="Simpson F."/>
            <person name="Thomas E.C."/>
            <person name="Flegg C."/>
            <person name="Gleeson P.A."/>
            <person name="Wicking C."/>
            <person name="Teasdale R.D."/>
        </authorList>
    </citation>
    <scope>INTERACTION WITH VPS26B</scope>
</reference>
<reference key="6">
    <citation type="journal article" date="2007" name="J. Immunol.">
        <title>Quantitative time-resolved phosphoproteomic analysis of mast cell signaling.</title>
        <authorList>
            <person name="Cao L."/>
            <person name="Yu K."/>
            <person name="Banh C."/>
            <person name="Nguyen V."/>
            <person name="Ritz A."/>
            <person name="Raphael B.J."/>
            <person name="Kawakami Y."/>
            <person name="Kawakami T."/>
            <person name="Salomon A.R."/>
        </authorList>
    </citation>
    <scope>PHOSPHORYLATION [LARGE SCALE ANALYSIS] AT TYR-791</scope>
    <scope>IDENTIFICATION BY MASS SPECTROMETRY [LARGE SCALE ANALYSIS]</scope>
    <source>
        <tissue>Mast cell</tissue>
    </source>
</reference>
<reference key="7">
    <citation type="journal article" date="2009" name="Mol. Cell. Proteomics">
        <title>Large scale localization of protein phosphorylation by use of electron capture dissociation mass spectrometry.</title>
        <authorList>
            <person name="Sweet S.M."/>
            <person name="Bailey C.M."/>
            <person name="Cunningham D.L."/>
            <person name="Heath J.K."/>
            <person name="Cooper H.J."/>
        </authorList>
    </citation>
    <scope>PHOSPHORYLATION [LARGE SCALE ANALYSIS] AT TYR-791</scope>
    <scope>IDENTIFICATION BY MASS SPECTROMETRY [LARGE SCALE ANALYSIS]</scope>
    <source>
        <tissue>Embryonic fibroblast</tissue>
    </source>
</reference>
<reference key="8">
    <citation type="journal article" date="2010" name="Biochem. Biophys. Res. Commun.">
        <title>Implication of mouse Vps26b-Vps29-Vps35 retromer complex in sortilin trafficking.</title>
        <authorList>
            <person name="Kim E."/>
            <person name="Lee Y."/>
            <person name="Lee H.J."/>
            <person name="Kim J.S."/>
            <person name="Song B.S."/>
            <person name="Huh J.W."/>
            <person name="Lee S.R."/>
            <person name="Kim S.U."/>
            <person name="Kim S.H."/>
            <person name="Hong Y."/>
            <person name="Shim I."/>
            <person name="Chang K.T."/>
        </authorList>
    </citation>
    <scope>SUBUNIT</scope>
</reference>
<reference key="9">
    <citation type="journal article" date="2010" name="Cell">
        <title>A tissue-specific atlas of mouse protein phosphorylation and expression.</title>
        <authorList>
            <person name="Huttlin E.L."/>
            <person name="Jedrychowski M.P."/>
            <person name="Elias J.E."/>
            <person name="Goswami T."/>
            <person name="Rad R."/>
            <person name="Beausoleil S.A."/>
            <person name="Villen J."/>
            <person name="Haas W."/>
            <person name="Sowa M.E."/>
            <person name="Gygi S.P."/>
        </authorList>
    </citation>
    <scope>PHOSPHORYLATION [LARGE SCALE ANALYSIS] AT SER-783</scope>
    <scope>IDENTIFICATION BY MASS SPECTROMETRY [LARGE SCALE ANALYSIS]</scope>
    <source>
        <tissue>Brain</tissue>
        <tissue>Brown adipose tissue</tissue>
        <tissue>Heart</tissue>
        <tissue>Kidney</tissue>
        <tissue>Liver</tissue>
        <tissue>Lung</tissue>
        <tissue>Pancreas</tissue>
        <tissue>Spleen</tissue>
        <tissue>Testis</tissue>
    </source>
</reference>
<reference key="10">
    <citation type="journal article" date="2011" name="Traffic">
        <title>Assembly and solution structure of the core retromer protein complex.</title>
        <authorList>
            <person name="Norwood S.J."/>
            <person name="Shaw D.J."/>
            <person name="Cowieson N.P."/>
            <person name="Owen D.J."/>
            <person name="Teasdale R.D."/>
            <person name="Collins B.M."/>
        </authorList>
    </citation>
    <scope>SUBUNIT</scope>
</reference>
<reference key="11">
    <citation type="journal article" date="2011" name="Traffic">
        <title>Vps26A and Vps26B subunits define distinct retromer complexes.</title>
        <authorList>
            <person name="Bugarcic A."/>
            <person name="Zhe Y."/>
            <person name="Kerr M.C."/>
            <person name="Griffin J."/>
            <person name="Collins B.M."/>
            <person name="Teasdale R.D."/>
        </authorList>
    </citation>
    <scope>SUBUNIT</scope>
</reference>
<reference key="12">
    <citation type="journal article" date="2013" name="Neuron">
        <title>RAB7L1 interacts with LRRK2 to modify intraneuronal protein sorting and Parkinson's disease risk.</title>
        <authorList>
            <person name="MacLeod D.A."/>
            <person name="Rhinn H."/>
            <person name="Kuwahara T."/>
            <person name="Zolin A."/>
            <person name="Di Paolo G."/>
            <person name="McCabe B.D."/>
            <person name="MacCabe B.D."/>
            <person name="Marder K.S."/>
            <person name="Honig L.S."/>
            <person name="Clark L.N."/>
            <person name="Small S.A."/>
            <person name="Abeliovich A."/>
        </authorList>
    </citation>
    <scope>INTERACTION WITH LRRK2</scope>
</reference>
<reference key="13">
    <citation type="journal article" date="2017" name="JCI Insight">
        <title>SorCS2-mediated NR2A trafficking regulates motor deficits in Huntington's disease.</title>
        <authorList>
            <person name="Ma Q."/>
            <person name="Yang J."/>
            <person name="Milner T.A."/>
            <person name="Vonsattel J.G."/>
            <person name="Palko M.E."/>
            <person name="Tessarollo L."/>
            <person name="Hempstead B.L."/>
        </authorList>
    </citation>
    <scope>INTERACTION WITH SORCS2</scope>
    <scope>TISSUE SPECIFICITY</scope>
</reference>
<comment type="function">
    <text evidence="2">Acts as a component of the retromer cargo-selective complex (CSC). The CSC is believed to be the core functional component of retromer or respective retromer complex variants acting to prevent missorting of selected transmembrane cargo proteins into the lysosomal degradation pathway. The recruitment of the CSC to the endosomal membrane involves RAB7A and SNX3. The CSC seems to associate with the cytoplasmic domain of cargo proteins predominantly via VPS35; however, these interactions seem to be of low affinity and retromer SNX proteins may also contribute to cargo selectivity thus questioning the classical function of the CSC. The SNX-BAR retromer mediates retrograde transport of cargo proteins from endosomes to the trans-Golgi network (TGN) and is involved in endosome-to-plasma membrane transport for cargo protein recycling. The SNX3-retromer mediates the retrograde transport of WLS distinct from the SNX-BAR retromer pathway. The SNX27-retromer is believed to be involved in endosome-to-plasma membrane trafficking and recycling of a broad spectrum of cargo proteins. The CSC seems to act as recruitment hub for other proteins, such as the WASH complex and TBC1D5 (Probable). Required for retrograde transport of lysosomal enzyme receptor IGF2R and SLC11A2. Required to regulate transcytosis of the polymeric immunoglobulin receptor (pIgR-pIgA). Required for endosomal localization of WASHC2 and mediates the association of the CSC with the WASH complex (By similarity).</text>
</comment>
<comment type="subunit">
    <text evidence="2 4 5 6 7 8 9">Component of the heterotrimeric retromer cargo-selective complex (CSC), also described as vacuolar protein sorting subcomplex (VPS) formed by VPS26 (VPS26A or VPS26B), VPS29 and VPS35. The CSC has a highly elongated structure with VPS26 and VPS29 binding independently at opposite distal ends of VPS35 as central platform (PubMed:20875039, PubMed:21040701, PubMed:21920005). The CSC is believed to associate with variable sorting nexins to form functionally distinct retromer complex variants. The originally described retromer complex (also called SNX-BAR retromer) is a pentamer containing the CSC and a heterodimeric membrane-deforming subcomplex formed between SNX1 or SNX2 and SNX5 or SNX6 (also called SNX-BAR subcomplex); the affinity between the respective CSC and SNX-BAR subcomplexes is low. The CSC associates with SNX3 to form a SNX3-retromer complex. The CSC associates with SNX27, the WASH complex and the SNX-BAR subcomplex to form the SNX27-retromer complex (Probable). Interacts with VPS26A, VPS29, VPS26B and LRRK2 (PubMed:16190980, PubMed:20875039, PubMed:21040701, PubMed:21920005, PubMed:23395371). Interacts with SNX1, SNX2, IGF2R, SNX3, GOLPH3, SLC11A2, WASHC2, FKBP15, WASHC1, EHD1. Interacts with MAGEL2; leading to recruitment of the TRIM27:MAGEL2 E3 ubiquitin ligase complex retromer-containing endosomes (By similarity). Interacts with SORCS2 (PubMed:28469074).</text>
</comment>
<comment type="interaction">
    <interactant intactId="EBI-775825">
        <id>Q9EQH3</id>
    </interactant>
    <interactant intactId="EBI-7540114">
        <id>O88307</id>
        <label>Sorl1</label>
    </interactant>
    <organismsDiffer>false</organismsDiffer>
    <experiments>2</experiments>
</comment>
<comment type="interaction">
    <interactant intactId="EBI-775825">
        <id>Q9EQH3</id>
    </interactant>
    <interactant intactId="EBI-6985663">
        <id>Q6PHU5</id>
        <label>Sort1</label>
    </interactant>
    <organismsDiffer>false</organismsDiffer>
    <experiments>3</experiments>
</comment>
<comment type="interaction">
    <interactant intactId="EBI-775825">
        <id>Q9EQH3</id>
    </interactant>
    <interactant intactId="EBI-15553779">
        <id>P40336-1</id>
        <label>Vps26a</label>
    </interactant>
    <organismsDiffer>false</organismsDiffer>
    <experiments>2</experiments>
</comment>
<comment type="interaction">
    <interactant intactId="EBI-775825">
        <id>Q9EQH3</id>
    </interactant>
    <interactant intactId="EBI-8334188">
        <id>Q9QZ88</id>
        <label>Vps29</label>
    </interactant>
    <organismsDiffer>false</organismsDiffer>
    <experiments>5</experiments>
</comment>
<comment type="interaction">
    <interactant intactId="EBI-775825">
        <id>Q9EQH3</id>
    </interactant>
    <interactant intactId="EBI-15553808">
        <id>Q9QZ88-1</id>
        <label>Vps29</label>
    </interactant>
    <organismsDiffer>false</organismsDiffer>
    <experiments>3</experiments>
</comment>
<comment type="interaction">
    <interactant intactId="EBI-775825">
        <id>Q9EQH3</id>
    </interactant>
    <interactant intactId="EBI-5235934">
        <id>Q5T1M5</id>
        <label>FKBP15</label>
    </interactant>
    <organismsDiffer>true</organismsDiffer>
    <experiments>3</experiments>
</comment>
<comment type="subcellular location">
    <subcellularLocation>
        <location evidence="1">Cytoplasm</location>
    </subcellularLocation>
    <subcellularLocation>
        <location evidence="1">Membrane</location>
        <topology evidence="1">Peripheral membrane protein</topology>
    </subcellularLocation>
    <subcellularLocation>
        <location evidence="2">Endosome</location>
    </subcellularLocation>
    <subcellularLocation>
        <location evidence="10">Early endosome</location>
    </subcellularLocation>
    <subcellularLocation>
        <location evidence="10">Late endosome</location>
    </subcellularLocation>
</comment>
<comment type="tissue specificity">
    <text evidence="9">Detected in striatum (at protein level) (PubMed:28469074). Ubiquitous. Highly expressed in fat tissue, testis, brain, kidney, thymus, liver and pancreas, and at lower levels in heart, intestine and skeletal muscle. Detected in oocytes, pre-implantation embryos and at 6.5-12.5 dpc.</text>
</comment>
<comment type="similarity">
    <text evidence="10">Belongs to the VPS35 family.</text>
</comment>
<comment type="sequence caution" evidence="10">
    <conflict type="frameshift">
        <sequence resource="EMBL-CDS" id="AAB18153"/>
    </conflict>
</comment>
<proteinExistence type="evidence at protein level"/>
<keyword id="KW-0002">3D-structure</keyword>
<keyword id="KW-0963">Cytoplasm</keyword>
<keyword id="KW-0903">Direct protein sequencing</keyword>
<keyword id="KW-0967">Endosome</keyword>
<keyword id="KW-0472">Membrane</keyword>
<keyword id="KW-0597">Phosphoprotein</keyword>
<keyword id="KW-0653">Protein transport</keyword>
<keyword id="KW-1185">Reference proteome</keyword>
<keyword id="KW-0813">Transport</keyword>
<sequence length="796" mass="91713">MPTTQQSPQDEQEKLLDEAIQAVKVQSFQMKRCLDKNKLMDALKHASNMLGELRTSMLSPKSYYELYMAISDELHYLEVYLTDEFAKGRKVADLYELVQYAGNIIPRLYLLITVGVVYVKSFPQSRKDILKDLVEMCRGVQHPLRGLFLRNYLLQCTRNILPDEGEPTDEETTGDISDSMDFVLLNFAEMNKLWVRMQHQGHSRDREKRERERQELRILVGTNLVRLSQLEGVNVERYKQIVLTGILEQVVNCRDALAQEYLMECIIQVFPDEFHLQTLNPFLRACAELHQNVNVKNIIIALIDRLALFAHREDGPGIPAEIKLFDIFSQQVATVIQSRQDMPSEDVVSLQVSLINLAMKCYPDRVDYVDKVLETTVEIFNKLNLEHIATSSAVSKELTRLLKIPVDTYNNILTVLKLKHFHPLFEYFDYESRKSMSCYVLSNVLDYNTEIVSQDQVDSIMNLVSTLIQDQPDQPVEDPDPEDFADEQSLVGRFIHLLRSDDPDQQYLILNTARKHFGAGGNQRIRFTLPPLVFAAYQLAFRYKENSQMDDKWEKKCQKIFSFAHQTISALIKAELAELPLRLFLQGALAAGEIGFENHETVAYEFMSQAFSLYEDEISDSKAQLAAITLIIGTFERMKCFSEENHEPLRTQCALAASKLLKKPDQGRAVSTCAHLFWSGRNTDKNGEELHGGKRVMECLKKALKIANQCMDPSLQVQLFIEILNRYIYFYEKENDAVTIQVLNQLIQKIREDLPNLESSEETEQINKHFHNTLEHLRSRRESPESEGPIYEGLIL</sequence>